<proteinExistence type="inferred from homology"/>
<organism>
    <name type="scientific">Histophilus somni (strain 2336)</name>
    <name type="common">Haemophilus somnus</name>
    <dbReference type="NCBI Taxonomy" id="228400"/>
    <lineage>
        <taxon>Bacteria</taxon>
        <taxon>Pseudomonadati</taxon>
        <taxon>Pseudomonadota</taxon>
        <taxon>Gammaproteobacteria</taxon>
        <taxon>Pasteurellales</taxon>
        <taxon>Pasteurellaceae</taxon>
        <taxon>Histophilus</taxon>
    </lineage>
</organism>
<keyword id="KW-0963">Cytoplasm</keyword>
<keyword id="KW-0690">Ribosome biogenesis</keyword>
<feature type="chain" id="PRO_1000073765" description="Ribosome-binding factor A">
    <location>
        <begin position="1"/>
        <end position="126"/>
    </location>
</feature>
<reference key="1">
    <citation type="submission" date="2008-02" db="EMBL/GenBank/DDBJ databases">
        <title>Complete sequence of Haemophilus somnus 2336.</title>
        <authorList>
            <consortium name="US DOE Joint Genome Institute"/>
            <person name="Siddaramappa S."/>
            <person name="Duncan A.J."/>
            <person name="Challacombe J.F."/>
            <person name="Rainey D."/>
            <person name="Gillaspy A.F."/>
            <person name="Carson M."/>
            <person name="Gipson J."/>
            <person name="Gipson M."/>
            <person name="Bruce D."/>
            <person name="Detter J.C."/>
            <person name="Han C.S."/>
            <person name="Land M."/>
            <person name="Tapia R."/>
            <person name="Thompson L.S."/>
            <person name="Orvis J."/>
            <person name="Zaitshik J."/>
            <person name="Barnes G."/>
            <person name="Brettin T.S."/>
            <person name="Dyer D.W."/>
            <person name="Inzana T.J."/>
        </authorList>
    </citation>
    <scope>NUCLEOTIDE SEQUENCE [LARGE SCALE GENOMIC DNA]</scope>
    <source>
        <strain>2336</strain>
    </source>
</reference>
<name>RBFA_HISS2</name>
<protein>
    <recommendedName>
        <fullName evidence="1">Ribosome-binding factor A</fullName>
    </recommendedName>
</protein>
<gene>
    <name evidence="1" type="primary">rbfA</name>
    <name type="ordered locus">HSM_1291</name>
</gene>
<sequence length="126" mass="14632">MAREFKRSDRVAQEIQKEVAVILQREVKDPRIGMVTVSDVEISSDLAYAKIFVTFLFDQDENVIEQGMKGLEKASPYIRSLLGKVMRLRIVPELRFIYDQSLVDGMRMSNLVTNVVREDEKRHVEE</sequence>
<evidence type="ECO:0000255" key="1">
    <source>
        <dbReference type="HAMAP-Rule" id="MF_00003"/>
    </source>
</evidence>
<dbReference type="EMBL" id="CP000947">
    <property type="protein sequence ID" value="ACA31022.1"/>
    <property type="molecule type" value="Genomic_DNA"/>
</dbReference>
<dbReference type="RefSeq" id="WP_011608975.1">
    <property type="nucleotide sequence ID" value="NC_010519.1"/>
</dbReference>
<dbReference type="SMR" id="B0UU14"/>
<dbReference type="STRING" id="228400.HSM_1291"/>
<dbReference type="GeneID" id="31487594"/>
<dbReference type="KEGG" id="hsm:HSM_1291"/>
<dbReference type="HOGENOM" id="CLU_089475_5_0_6"/>
<dbReference type="GO" id="GO:0005829">
    <property type="term" value="C:cytosol"/>
    <property type="evidence" value="ECO:0007669"/>
    <property type="project" value="TreeGrafter"/>
</dbReference>
<dbReference type="GO" id="GO:0043024">
    <property type="term" value="F:ribosomal small subunit binding"/>
    <property type="evidence" value="ECO:0007669"/>
    <property type="project" value="TreeGrafter"/>
</dbReference>
<dbReference type="GO" id="GO:0030490">
    <property type="term" value="P:maturation of SSU-rRNA"/>
    <property type="evidence" value="ECO:0007669"/>
    <property type="project" value="UniProtKB-UniRule"/>
</dbReference>
<dbReference type="FunFam" id="3.30.300.20:FF:000007">
    <property type="entry name" value="Ribosome-binding factor A"/>
    <property type="match status" value="1"/>
</dbReference>
<dbReference type="Gene3D" id="3.30.300.20">
    <property type="match status" value="1"/>
</dbReference>
<dbReference type="HAMAP" id="MF_00003">
    <property type="entry name" value="RbfA"/>
    <property type="match status" value="1"/>
</dbReference>
<dbReference type="InterPro" id="IPR015946">
    <property type="entry name" value="KH_dom-like_a/b"/>
</dbReference>
<dbReference type="InterPro" id="IPR000238">
    <property type="entry name" value="RbfA"/>
</dbReference>
<dbReference type="InterPro" id="IPR023799">
    <property type="entry name" value="RbfA_dom_sf"/>
</dbReference>
<dbReference type="InterPro" id="IPR020053">
    <property type="entry name" value="Ribosome-bd_factorA_CS"/>
</dbReference>
<dbReference type="NCBIfam" id="TIGR00082">
    <property type="entry name" value="rbfA"/>
    <property type="match status" value="1"/>
</dbReference>
<dbReference type="PANTHER" id="PTHR33515">
    <property type="entry name" value="RIBOSOME-BINDING FACTOR A, CHLOROPLASTIC-RELATED"/>
    <property type="match status" value="1"/>
</dbReference>
<dbReference type="PANTHER" id="PTHR33515:SF1">
    <property type="entry name" value="RIBOSOME-BINDING FACTOR A, CHLOROPLASTIC-RELATED"/>
    <property type="match status" value="1"/>
</dbReference>
<dbReference type="Pfam" id="PF02033">
    <property type="entry name" value="RBFA"/>
    <property type="match status" value="1"/>
</dbReference>
<dbReference type="SUPFAM" id="SSF89919">
    <property type="entry name" value="Ribosome-binding factor A, RbfA"/>
    <property type="match status" value="1"/>
</dbReference>
<dbReference type="PROSITE" id="PS01319">
    <property type="entry name" value="RBFA"/>
    <property type="match status" value="1"/>
</dbReference>
<comment type="function">
    <text evidence="1">One of several proteins that assist in the late maturation steps of the functional core of the 30S ribosomal subunit. Associates with free 30S ribosomal subunits (but not with 30S subunits that are part of 70S ribosomes or polysomes). Required for efficient processing of 16S rRNA. May interact with the 5'-terminal helix region of 16S rRNA.</text>
</comment>
<comment type="subunit">
    <text evidence="1">Monomer. Binds 30S ribosomal subunits, but not 50S ribosomal subunits or 70S ribosomes.</text>
</comment>
<comment type="subcellular location">
    <subcellularLocation>
        <location evidence="1">Cytoplasm</location>
    </subcellularLocation>
</comment>
<comment type="similarity">
    <text evidence="1">Belongs to the RbfA family.</text>
</comment>
<accession>B0UU14</accession>